<name>ATPE_HYDCU</name>
<sequence length="144" mass="15435">MAVSMQVDIVSAEGSLFSGKADMVFAQAADGEVGILPKHTQLLTQLKPGQVRVVSGDEEDSFFINSGVLEVQPSVVTILADTAIRAEDLDQAAAEEAKRRAEDAMEQAKSDTDIARAQIELAEAVAQIQTITKLRDRLHKTGLS</sequence>
<organism>
    <name type="scientific">Hydrogenovibrio crunogenus (strain DSM 25203 / XCL-2)</name>
    <name type="common">Thiomicrospira crunogena</name>
    <dbReference type="NCBI Taxonomy" id="317025"/>
    <lineage>
        <taxon>Bacteria</taxon>
        <taxon>Pseudomonadati</taxon>
        <taxon>Pseudomonadota</taxon>
        <taxon>Gammaproteobacteria</taxon>
        <taxon>Thiotrichales</taxon>
        <taxon>Piscirickettsiaceae</taxon>
        <taxon>Hydrogenovibrio</taxon>
    </lineage>
</organism>
<proteinExistence type="inferred from homology"/>
<gene>
    <name evidence="1" type="primary">atpC</name>
    <name type="ordered locus">Tcr_2164</name>
</gene>
<evidence type="ECO:0000255" key="1">
    <source>
        <dbReference type="HAMAP-Rule" id="MF_00530"/>
    </source>
</evidence>
<accession>Q31DM1</accession>
<comment type="function">
    <text evidence="1">Produces ATP from ADP in the presence of a proton gradient across the membrane.</text>
</comment>
<comment type="subunit">
    <text>F-type ATPases have 2 components, CF(1) - the catalytic core - and CF(0) - the membrane proton channel. CF(1) has five subunits: alpha(3), beta(3), gamma(1), delta(1), epsilon(1). CF(0) has three main subunits: a, b and c.</text>
</comment>
<comment type="subcellular location">
    <subcellularLocation>
        <location evidence="1">Cell inner membrane</location>
        <topology evidence="1">Peripheral membrane protein</topology>
    </subcellularLocation>
</comment>
<comment type="similarity">
    <text evidence="1">Belongs to the ATPase epsilon chain family.</text>
</comment>
<reference key="1">
    <citation type="journal article" date="2006" name="PLoS Biol.">
        <title>The genome of deep-sea vent chemolithoautotroph Thiomicrospira crunogena XCL-2.</title>
        <authorList>
            <person name="Scott K.M."/>
            <person name="Sievert S.M."/>
            <person name="Abril F.N."/>
            <person name="Ball L.A."/>
            <person name="Barrett C.J."/>
            <person name="Blake R.A."/>
            <person name="Boller A.J."/>
            <person name="Chain P.S.G."/>
            <person name="Clark J.A."/>
            <person name="Davis C.R."/>
            <person name="Detter C."/>
            <person name="Do K.F."/>
            <person name="Dobrinski K.P."/>
            <person name="Faza B.I."/>
            <person name="Fitzpatrick K.A."/>
            <person name="Freyermuth S.K."/>
            <person name="Harmer T.L."/>
            <person name="Hauser L.J."/>
            <person name="Huegler M."/>
            <person name="Kerfeld C.A."/>
            <person name="Klotz M.G."/>
            <person name="Kong W.W."/>
            <person name="Land M."/>
            <person name="Lapidus A."/>
            <person name="Larimer F.W."/>
            <person name="Longo D.L."/>
            <person name="Lucas S."/>
            <person name="Malfatti S.A."/>
            <person name="Massey S.E."/>
            <person name="Martin D.D."/>
            <person name="McCuddin Z."/>
            <person name="Meyer F."/>
            <person name="Moore J.L."/>
            <person name="Ocampo L.H. Jr."/>
            <person name="Paul J.H."/>
            <person name="Paulsen I.T."/>
            <person name="Reep D.K."/>
            <person name="Ren Q."/>
            <person name="Ross R.L."/>
            <person name="Sato P.Y."/>
            <person name="Thomas P."/>
            <person name="Tinkham L.E."/>
            <person name="Zeruth G.T."/>
        </authorList>
    </citation>
    <scope>NUCLEOTIDE SEQUENCE [LARGE SCALE GENOMIC DNA]</scope>
    <source>
        <strain>DSM 25203 / XCL-2</strain>
    </source>
</reference>
<keyword id="KW-0066">ATP synthesis</keyword>
<keyword id="KW-0997">Cell inner membrane</keyword>
<keyword id="KW-1003">Cell membrane</keyword>
<keyword id="KW-0139">CF(1)</keyword>
<keyword id="KW-0375">Hydrogen ion transport</keyword>
<keyword id="KW-0406">Ion transport</keyword>
<keyword id="KW-0472">Membrane</keyword>
<keyword id="KW-0813">Transport</keyword>
<dbReference type="EMBL" id="CP000109">
    <property type="protein sequence ID" value="ABB42752.1"/>
    <property type="molecule type" value="Genomic_DNA"/>
</dbReference>
<dbReference type="SMR" id="Q31DM1"/>
<dbReference type="STRING" id="317025.Tcr_2164"/>
<dbReference type="KEGG" id="tcx:Tcr_2164"/>
<dbReference type="eggNOG" id="COG0355">
    <property type="taxonomic scope" value="Bacteria"/>
</dbReference>
<dbReference type="HOGENOM" id="CLU_084338_2_0_6"/>
<dbReference type="OrthoDB" id="9791445at2"/>
<dbReference type="GO" id="GO:0005886">
    <property type="term" value="C:plasma membrane"/>
    <property type="evidence" value="ECO:0007669"/>
    <property type="project" value="UniProtKB-SubCell"/>
</dbReference>
<dbReference type="GO" id="GO:0045259">
    <property type="term" value="C:proton-transporting ATP synthase complex"/>
    <property type="evidence" value="ECO:0007669"/>
    <property type="project" value="UniProtKB-KW"/>
</dbReference>
<dbReference type="GO" id="GO:0005524">
    <property type="term" value="F:ATP binding"/>
    <property type="evidence" value="ECO:0007669"/>
    <property type="project" value="UniProtKB-UniRule"/>
</dbReference>
<dbReference type="GO" id="GO:0046933">
    <property type="term" value="F:proton-transporting ATP synthase activity, rotational mechanism"/>
    <property type="evidence" value="ECO:0007669"/>
    <property type="project" value="UniProtKB-UniRule"/>
</dbReference>
<dbReference type="CDD" id="cd12152">
    <property type="entry name" value="F1-ATPase_delta"/>
    <property type="match status" value="1"/>
</dbReference>
<dbReference type="FunFam" id="2.60.15.10:FF:000001">
    <property type="entry name" value="ATP synthase epsilon chain"/>
    <property type="match status" value="1"/>
</dbReference>
<dbReference type="Gene3D" id="1.20.5.440">
    <property type="entry name" value="ATP synthase delta/epsilon subunit, C-terminal domain"/>
    <property type="match status" value="1"/>
</dbReference>
<dbReference type="Gene3D" id="2.60.15.10">
    <property type="entry name" value="F0F1 ATP synthase delta/epsilon subunit, N-terminal"/>
    <property type="match status" value="1"/>
</dbReference>
<dbReference type="HAMAP" id="MF_00530">
    <property type="entry name" value="ATP_synth_epsil_bac"/>
    <property type="match status" value="1"/>
</dbReference>
<dbReference type="InterPro" id="IPR036794">
    <property type="entry name" value="ATP_F1_dsu/esu_C_sf"/>
</dbReference>
<dbReference type="InterPro" id="IPR001469">
    <property type="entry name" value="ATP_synth_F1_dsu/esu"/>
</dbReference>
<dbReference type="InterPro" id="IPR020546">
    <property type="entry name" value="ATP_synth_F1_dsu/esu_N"/>
</dbReference>
<dbReference type="InterPro" id="IPR020547">
    <property type="entry name" value="ATP_synth_F1_esu_C"/>
</dbReference>
<dbReference type="InterPro" id="IPR036771">
    <property type="entry name" value="ATPsynth_dsu/esu_N"/>
</dbReference>
<dbReference type="NCBIfam" id="TIGR01216">
    <property type="entry name" value="ATP_synt_epsi"/>
    <property type="match status" value="1"/>
</dbReference>
<dbReference type="NCBIfam" id="NF001847">
    <property type="entry name" value="PRK00571.1-4"/>
    <property type="match status" value="1"/>
</dbReference>
<dbReference type="PANTHER" id="PTHR13822">
    <property type="entry name" value="ATP SYNTHASE DELTA/EPSILON CHAIN"/>
    <property type="match status" value="1"/>
</dbReference>
<dbReference type="PANTHER" id="PTHR13822:SF10">
    <property type="entry name" value="ATP SYNTHASE EPSILON CHAIN, CHLOROPLASTIC"/>
    <property type="match status" value="1"/>
</dbReference>
<dbReference type="Pfam" id="PF00401">
    <property type="entry name" value="ATP-synt_DE"/>
    <property type="match status" value="1"/>
</dbReference>
<dbReference type="Pfam" id="PF02823">
    <property type="entry name" value="ATP-synt_DE_N"/>
    <property type="match status" value="1"/>
</dbReference>
<dbReference type="SUPFAM" id="SSF46604">
    <property type="entry name" value="Epsilon subunit of F1F0-ATP synthase C-terminal domain"/>
    <property type="match status" value="1"/>
</dbReference>
<dbReference type="SUPFAM" id="SSF51344">
    <property type="entry name" value="Epsilon subunit of F1F0-ATP synthase N-terminal domain"/>
    <property type="match status" value="1"/>
</dbReference>
<protein>
    <recommendedName>
        <fullName evidence="1">ATP synthase epsilon chain</fullName>
    </recommendedName>
    <alternativeName>
        <fullName evidence="1">ATP synthase F1 sector epsilon subunit</fullName>
    </alternativeName>
    <alternativeName>
        <fullName evidence="1">F-ATPase epsilon subunit</fullName>
    </alternativeName>
</protein>
<feature type="chain" id="PRO_0000265919" description="ATP synthase epsilon chain">
    <location>
        <begin position="1"/>
        <end position="144"/>
    </location>
</feature>